<dbReference type="EMBL" id="CP001022">
    <property type="protein sequence ID" value="ACB60185.1"/>
    <property type="molecule type" value="Genomic_DNA"/>
</dbReference>
<dbReference type="RefSeq" id="WP_012369609.1">
    <property type="nucleotide sequence ID" value="NC_010556.1"/>
</dbReference>
<dbReference type="SMR" id="B1YKK2"/>
<dbReference type="STRING" id="262543.Exig_0704"/>
<dbReference type="KEGG" id="esi:Exig_0704"/>
<dbReference type="eggNOG" id="COG1970">
    <property type="taxonomic scope" value="Bacteria"/>
</dbReference>
<dbReference type="HOGENOM" id="CLU_095787_0_0_9"/>
<dbReference type="OrthoDB" id="9810350at2"/>
<dbReference type="Proteomes" id="UP000001681">
    <property type="component" value="Chromosome"/>
</dbReference>
<dbReference type="GO" id="GO:0005886">
    <property type="term" value="C:plasma membrane"/>
    <property type="evidence" value="ECO:0007669"/>
    <property type="project" value="UniProtKB-SubCell"/>
</dbReference>
<dbReference type="GO" id="GO:0008381">
    <property type="term" value="F:mechanosensitive monoatomic ion channel activity"/>
    <property type="evidence" value="ECO:0007669"/>
    <property type="project" value="UniProtKB-UniRule"/>
</dbReference>
<dbReference type="Gene3D" id="1.10.1200.120">
    <property type="entry name" value="Large-conductance mechanosensitive channel, MscL, domain 1"/>
    <property type="match status" value="1"/>
</dbReference>
<dbReference type="HAMAP" id="MF_00115">
    <property type="entry name" value="MscL"/>
    <property type="match status" value="1"/>
</dbReference>
<dbReference type="InterPro" id="IPR019823">
    <property type="entry name" value="Mechanosensitive_channel_CS"/>
</dbReference>
<dbReference type="InterPro" id="IPR001185">
    <property type="entry name" value="MS_channel"/>
</dbReference>
<dbReference type="InterPro" id="IPR037673">
    <property type="entry name" value="MSC/AndL"/>
</dbReference>
<dbReference type="InterPro" id="IPR036019">
    <property type="entry name" value="MscL_channel"/>
</dbReference>
<dbReference type="NCBIfam" id="TIGR00220">
    <property type="entry name" value="mscL"/>
    <property type="match status" value="1"/>
</dbReference>
<dbReference type="NCBIfam" id="NF001843">
    <property type="entry name" value="PRK00567.1-4"/>
    <property type="match status" value="1"/>
</dbReference>
<dbReference type="PANTHER" id="PTHR30266:SF2">
    <property type="entry name" value="LARGE-CONDUCTANCE MECHANOSENSITIVE CHANNEL"/>
    <property type="match status" value="1"/>
</dbReference>
<dbReference type="PANTHER" id="PTHR30266">
    <property type="entry name" value="MECHANOSENSITIVE CHANNEL MSCL"/>
    <property type="match status" value="1"/>
</dbReference>
<dbReference type="Pfam" id="PF01741">
    <property type="entry name" value="MscL"/>
    <property type="match status" value="1"/>
</dbReference>
<dbReference type="PRINTS" id="PR01264">
    <property type="entry name" value="MECHCHANNEL"/>
</dbReference>
<dbReference type="SUPFAM" id="SSF81330">
    <property type="entry name" value="Gated mechanosensitive channel"/>
    <property type="match status" value="1"/>
</dbReference>
<dbReference type="PROSITE" id="PS01327">
    <property type="entry name" value="MSCL"/>
    <property type="match status" value="1"/>
</dbReference>
<evidence type="ECO:0000255" key="1">
    <source>
        <dbReference type="HAMAP-Rule" id="MF_00115"/>
    </source>
</evidence>
<comment type="function">
    <text evidence="1">Channel that opens in response to stretch forces in the membrane lipid bilayer. May participate in the regulation of osmotic pressure changes within the cell.</text>
</comment>
<comment type="subunit">
    <text evidence="1">Homopentamer.</text>
</comment>
<comment type="subcellular location">
    <subcellularLocation>
        <location evidence="1">Cell membrane</location>
        <topology evidence="1">Multi-pass membrane protein</topology>
    </subcellularLocation>
</comment>
<comment type="similarity">
    <text evidence="1">Belongs to the MscL family.</text>
</comment>
<keyword id="KW-1003">Cell membrane</keyword>
<keyword id="KW-0407">Ion channel</keyword>
<keyword id="KW-0406">Ion transport</keyword>
<keyword id="KW-0472">Membrane</keyword>
<keyword id="KW-1185">Reference proteome</keyword>
<keyword id="KW-0812">Transmembrane</keyword>
<keyword id="KW-1133">Transmembrane helix</keyword>
<keyword id="KW-0813">Transport</keyword>
<proteinExistence type="inferred from homology"/>
<feature type="chain" id="PRO_1000191373" description="Large-conductance mechanosensitive channel">
    <location>
        <begin position="1"/>
        <end position="129"/>
    </location>
</feature>
<feature type="transmembrane region" description="Helical" evidence="1">
    <location>
        <begin position="8"/>
        <end position="28"/>
    </location>
</feature>
<feature type="transmembrane region" description="Helical" evidence="1">
    <location>
        <begin position="30"/>
        <end position="50"/>
    </location>
</feature>
<feature type="transmembrane region" description="Helical" evidence="1">
    <location>
        <begin position="67"/>
        <end position="87"/>
    </location>
</feature>
<reference key="1">
    <citation type="submission" date="2008-04" db="EMBL/GenBank/DDBJ databases">
        <title>Complete sequence of chromosome of Exiguobacterium sibiricum 255-15.</title>
        <authorList>
            <consortium name="US DOE Joint Genome Institute"/>
            <person name="Copeland A."/>
            <person name="Lucas S."/>
            <person name="Lapidus A."/>
            <person name="Glavina del Rio T."/>
            <person name="Dalin E."/>
            <person name="Tice H."/>
            <person name="Bruce D."/>
            <person name="Goodwin L."/>
            <person name="Pitluck S."/>
            <person name="Kiss H."/>
            <person name="Chertkov O."/>
            <person name="Monk C."/>
            <person name="Brettin T."/>
            <person name="Detter J.C."/>
            <person name="Han C."/>
            <person name="Kuske C.R."/>
            <person name="Schmutz J."/>
            <person name="Larimer F."/>
            <person name="Land M."/>
            <person name="Hauser L."/>
            <person name="Kyrpides N."/>
            <person name="Mikhailova N."/>
            <person name="Vishnivetskaya T."/>
            <person name="Rodrigues D.F."/>
            <person name="Gilichinsky D."/>
            <person name="Tiedje J."/>
            <person name="Richardson P."/>
        </authorList>
    </citation>
    <scope>NUCLEOTIDE SEQUENCE [LARGE SCALE GENOMIC DNA]</scope>
    <source>
        <strain>DSM 17290 / CCUG 55495 / CIP 109462 / JCM 13490 / 255-15</strain>
    </source>
</reference>
<protein>
    <recommendedName>
        <fullName evidence="1">Large-conductance mechanosensitive channel</fullName>
    </recommendedName>
</protein>
<gene>
    <name evidence="1" type="primary">mscL</name>
    <name type="ordered locus">Exig_0704</name>
</gene>
<organism>
    <name type="scientific">Exiguobacterium sibiricum (strain DSM 17290 / CCUG 55495 / CIP 109462 / JCM 13490 / 255-15)</name>
    <dbReference type="NCBI Taxonomy" id="262543"/>
    <lineage>
        <taxon>Bacteria</taxon>
        <taxon>Bacillati</taxon>
        <taxon>Bacillota</taxon>
        <taxon>Bacilli</taxon>
        <taxon>Bacillales</taxon>
        <taxon>Bacillales Family XII. Incertae Sedis</taxon>
        <taxon>Exiguobacterium</taxon>
    </lineage>
</organism>
<name>MSCL_EXIS2</name>
<accession>B1YKK2</accession>
<sequence length="129" mass="14227">MFKAFKEFAFRGNVIDLAVGVILGAAFSGIIKSLVDSIFMPLIGIIIGGIDVKGLSVEVGNANLLYGQFLQASIEFILIAFALFLFVKGINAFRRKEETTEEVAAPTTEEKLLTEIRDALVRQQNERMK</sequence>